<dbReference type="EMBL" id="AF063097">
    <property type="protein sequence ID" value="AAD03282.1"/>
    <property type="molecule type" value="Genomic_DNA"/>
</dbReference>
<dbReference type="RefSeq" id="NP_046771.1">
    <property type="nucleotide sequence ID" value="NC_001895.1"/>
</dbReference>
<dbReference type="PDB" id="3AQJ">
    <property type="method" value="X-ray"/>
    <property type="resolution" value="1.27 A"/>
    <property type="chains" value="A/B/C/P/Q/R=87-211"/>
</dbReference>
<dbReference type="PDB" id="3QR7">
    <property type="method" value="X-ray"/>
    <property type="resolution" value="0.94 A"/>
    <property type="chains" value="A/B=97-211"/>
</dbReference>
<dbReference type="PDB" id="3QR8">
    <property type="method" value="X-ray"/>
    <property type="resolution" value="2.03 A"/>
    <property type="chains" value="A=1-211"/>
</dbReference>
<dbReference type="PDB" id="8VOL">
    <property type="method" value="X-ray"/>
    <property type="resolution" value="0.90 A"/>
    <property type="chains" value="A/B/C/D/E/F=98-197"/>
</dbReference>
<dbReference type="PDB" id="8VOM">
    <property type="method" value="X-ray"/>
    <property type="resolution" value="1.25 A"/>
    <property type="chains" value="A/B/C/D/E/F=98-211"/>
</dbReference>
<dbReference type="PDB" id="8VON">
    <property type="method" value="X-ray"/>
    <property type="resolution" value="1.15 A"/>
    <property type="chains" value="A/B/C/D/E/F=98-211"/>
</dbReference>
<dbReference type="PDBsum" id="3AQJ"/>
<dbReference type="PDBsum" id="3QR7"/>
<dbReference type="PDBsum" id="3QR8"/>
<dbReference type="PDBsum" id="8VOL"/>
<dbReference type="PDBsum" id="8VOM"/>
<dbReference type="PDBsum" id="8VON"/>
<dbReference type="SMR" id="P31340"/>
<dbReference type="GeneID" id="77440824"/>
<dbReference type="KEGG" id="vg:77440824"/>
<dbReference type="EvolutionaryTrace" id="P31340"/>
<dbReference type="Proteomes" id="UP000009092">
    <property type="component" value="Genome"/>
</dbReference>
<dbReference type="GO" id="GO:0098025">
    <property type="term" value="C:virus tail, baseplate"/>
    <property type="evidence" value="ECO:0007669"/>
    <property type="project" value="UniProtKB-KW"/>
</dbReference>
<dbReference type="GO" id="GO:0046872">
    <property type="term" value="F:metal ion binding"/>
    <property type="evidence" value="ECO:0007669"/>
    <property type="project" value="UniProtKB-KW"/>
</dbReference>
<dbReference type="GO" id="GO:0098670">
    <property type="term" value="P:entry receptor-mediated virion attachment to host cell"/>
    <property type="evidence" value="ECO:0007669"/>
    <property type="project" value="UniProtKB-KW"/>
</dbReference>
<dbReference type="GO" id="GO:0044694">
    <property type="term" value="P:symbiont genome entry into host cell via pore formation in plasma membrane"/>
    <property type="evidence" value="ECO:0007669"/>
    <property type="project" value="UniProtKB-KW"/>
</dbReference>
<dbReference type="GO" id="GO:0098003">
    <property type="term" value="P:viral tail assembly"/>
    <property type="evidence" value="ECO:0007669"/>
    <property type="project" value="UniProtKB-KW"/>
</dbReference>
<dbReference type="Gene3D" id="6.20.150.10">
    <property type="match status" value="1"/>
</dbReference>
<dbReference type="Gene3D" id="2.40.50.230">
    <property type="entry name" value="Gp5 N-terminal domain"/>
    <property type="match status" value="1"/>
</dbReference>
<dbReference type="InterPro" id="IPR006531">
    <property type="entry name" value="Gp5/Vgr_OB"/>
</dbReference>
<dbReference type="InterPro" id="IPR013046">
    <property type="entry name" value="GpV/Gp45"/>
</dbReference>
<dbReference type="InterPro" id="IPR040629">
    <property type="entry name" value="Phage_spike"/>
</dbReference>
<dbReference type="InterPro" id="IPR037026">
    <property type="entry name" value="Vgr_OB-fold_dom_sf"/>
</dbReference>
<dbReference type="NCBIfam" id="TIGR01644">
    <property type="entry name" value="phage_P2_V"/>
    <property type="match status" value="1"/>
</dbReference>
<dbReference type="Pfam" id="PF04717">
    <property type="entry name" value="Phage_base_V"/>
    <property type="match status" value="1"/>
</dbReference>
<dbReference type="Pfam" id="PF18715">
    <property type="entry name" value="Phage_spike"/>
    <property type="match status" value="1"/>
</dbReference>
<organism>
    <name type="scientific">Escherichia phage P2</name>
    <name type="common">Bacteriophage P2</name>
    <dbReference type="NCBI Taxonomy" id="2905681"/>
    <lineage>
        <taxon>Viruses</taxon>
        <taxon>Duplodnaviria</taxon>
        <taxon>Heunggongvirae</taxon>
        <taxon>Uroviricota</taxon>
        <taxon>Caudoviricetes</taxon>
        <taxon>Peduoviridae</taxon>
        <taxon>Peduovirus</taxon>
        <taxon>Peduovirus P2</taxon>
    </lineage>
</organism>
<reference key="1">
    <citation type="journal article" date="1995" name="Virology">
        <title>Bacteriophage P2: genes involved in baseplate assembly.</title>
        <authorList>
            <person name="Haggaard-Ljungquist E."/>
            <person name="Jacobsen E."/>
            <person name="Rishovd S."/>
            <person name="Six E.W."/>
            <person name="Nilssen O."/>
            <person name="Sunshine M.G."/>
            <person name="Lindqvist B.H."/>
            <person name="Kim K.-J."/>
            <person name="Barreiro V."/>
            <person name="Koonin E.V."/>
            <person name="Calendar R."/>
        </authorList>
    </citation>
    <scope>NUCLEOTIDE SEQUENCE [GENOMIC DNA]</scope>
    <scope>FUNCTION</scope>
</reference>
<reference key="2">
    <citation type="journal article" date="1985" name="J. Mol. Biol.">
        <title>Bacteriophage P2 late promoters. II. Comparison of the four late promoter sequences.</title>
        <authorList>
            <person name="Christie G.E."/>
            <person name="Calendar R."/>
        </authorList>
    </citation>
    <scope>NUCLEOTIDE SEQUENCE [GENOMIC DNA] OF 1-72</scope>
</reference>
<reference key="3">
    <citation type="submission" date="1997-01" db="EMBL/GenBank/DDBJ databases">
        <authorList>
            <person name="Christie G.E."/>
        </authorList>
    </citation>
    <scope>NUCLEOTIDE SEQUENCE [GENOMIC DNA]</scope>
    <scope>SEQUENCE REVISION</scope>
</reference>
<reference key="4">
    <citation type="journal article" date="1994" name="Virology">
        <title>Molecular cloning and characterization of bacteriophage P2 genes R and S involved in tail completion.</title>
        <authorList>
            <person name="Linderoth N.A."/>
            <person name="Julien B."/>
            <person name="Flick K.E."/>
            <person name="Calendar R."/>
            <person name="Christie G.E."/>
        </authorList>
    </citation>
    <scope>NUCLEOTIDE SEQUENCE [GENOMIC DNA] OF 1-24</scope>
</reference>
<reference evidence="6" key="5">
    <citation type="journal article" date="2011" name="Acta Crystallogr. F">
        <title>The host-binding domain of the P2 phage tail spike reveals a trimeric iron-binding structure.</title>
        <authorList>
            <person name="Yamashita E."/>
            <person name="Nakagawa A."/>
            <person name="Takahashi J."/>
            <person name="Tsunoda K."/>
            <person name="Yamada S."/>
            <person name="Takeda S."/>
        </authorList>
    </citation>
    <scope>X-RAY CRYSTALLOGRAPHY (1.27 ANGSTROMS) OF 87-211</scope>
    <scope>FUNCTION</scope>
    <scope>SUBCELLULAR LOCATION</scope>
    <scope>COFACTOR</scope>
    <scope>SUBUNIT</scope>
</reference>
<reference evidence="7 8" key="6">
    <citation type="journal article" date="2012" name="Structure">
        <title>Phage pierces the host cell membrane with the iron-loaded spike.</title>
        <authorList>
            <person name="Browning C."/>
            <person name="Shneider M.M."/>
            <person name="Bowman V.D."/>
            <person name="Schwarzer D."/>
            <person name="Leiman P.G."/>
        </authorList>
    </citation>
    <scope>X-RAY CRYSTALLOGRAPHY (0.94 ANGSTROMS) OF 97-211 IN COMPLEX WITH CHLORIDE</scope>
    <scope>COFACTOR</scope>
</reference>
<proteinExistence type="evidence at protein level"/>
<keyword id="KW-0002">3D-structure</keyword>
<keyword id="KW-0945">Host-virus interaction</keyword>
<keyword id="KW-0426">Late protein</keyword>
<keyword id="KW-0479">Metal-binding</keyword>
<keyword id="KW-1172">Pore-mediated penetration of viral genome into host cell</keyword>
<keyword id="KW-1185">Reference proteome</keyword>
<keyword id="KW-1161">Viral attachment to host cell</keyword>
<keyword id="KW-1234">Viral attachment to host entry receptor</keyword>
<keyword id="KW-1226">Viral baseplate protein</keyword>
<keyword id="KW-1162">Viral penetration into host cytoplasm</keyword>
<keyword id="KW-1188">Viral release from host cell</keyword>
<keyword id="KW-1245">Viral tail assembly</keyword>
<keyword id="KW-1227">Viral tail protein</keyword>
<keyword id="KW-0946">Virion</keyword>
<keyword id="KW-1160">Virus entry into host cell</keyword>
<protein>
    <recommendedName>
        <fullName evidence="4">Spike protein</fullName>
    </recommendedName>
    <alternativeName>
        <fullName evidence="4">Baseplate assembly protein gpV</fullName>
    </alternativeName>
    <alternativeName>
        <fullName evidence="4">Gene V protein</fullName>
        <shortName>GpV</shortName>
    </alternativeName>
</protein>
<gene>
    <name type="primary">V</name>
</gene>
<name>SPIKE_BPP2</name>
<evidence type="ECO:0000256" key="1">
    <source>
        <dbReference type="SAM" id="MobiDB-lite"/>
    </source>
</evidence>
<evidence type="ECO:0000269" key="2">
    <source>
    </source>
</evidence>
<evidence type="ECO:0000269" key="3">
    <source>
    </source>
</evidence>
<evidence type="ECO:0000305" key="4"/>
<evidence type="ECO:0000305" key="5">
    <source>
    </source>
</evidence>
<evidence type="ECO:0007744" key="6">
    <source>
        <dbReference type="PDB" id="3AQJ"/>
    </source>
</evidence>
<evidence type="ECO:0007744" key="7">
    <source>
        <dbReference type="PDB" id="3QR7"/>
    </source>
</evidence>
<evidence type="ECO:0007744" key="8">
    <source>
        <dbReference type="PDB" id="3QR8"/>
    </source>
</evidence>
<evidence type="ECO:0007829" key="9">
    <source>
        <dbReference type="PDB" id="3AQJ"/>
    </source>
</evidence>
<evidence type="ECO:0007829" key="10">
    <source>
        <dbReference type="PDB" id="3QR7"/>
    </source>
</evidence>
<evidence type="ECO:0007829" key="11">
    <source>
        <dbReference type="PDB" id="3QR8"/>
    </source>
</evidence>
<comment type="function">
    <text evidence="2 5">Forms the small spikes on the baseplate that plug the end of the tube before DNA ejection and form a channel perforating the host membrane during ejection. Involved in baseplate assembly.</text>
</comment>
<comment type="cofactor">
    <cofactor evidence="2">
        <name>Ca(2+)</name>
        <dbReference type="ChEBI" id="CHEBI:29108"/>
    </cofactor>
    <text>Binds 1 calcium ion per spike trimer.</text>
</comment>
<comment type="cofactor">
    <cofactor evidence="2 3">
        <name>Fe cation</name>
        <dbReference type="ChEBI" id="CHEBI:24875"/>
    </cofactor>
    <text>Binds 1 Fe cation per spike trimer.</text>
</comment>
<comment type="cofactor">
    <cofactor evidence="2 3">
        <name>chloride</name>
        <dbReference type="ChEBI" id="CHEBI:17996"/>
    </cofactor>
    <text>Binds 1 chloride per spike trimer.</text>
</comment>
<comment type="subunit">
    <text>homotrimer.</text>
</comment>
<comment type="subcellular location">
    <subcellularLocation>
        <location evidence="2">Virion</location>
    </subcellularLocation>
    <text evidence="2">Part of the virion tail.</text>
</comment>
<comment type="induction">
    <text evidence="4">Expressed in the late phase of the viral replicative cycle.</text>
</comment>
<comment type="similarity">
    <text evidence="4">Belongs to the P2likevirus spike protein family.</text>
</comment>
<feature type="chain" id="PRO_0000165263" description="Spike protein">
    <location>
        <begin position="1"/>
        <end position="211"/>
    </location>
</feature>
<feature type="region of interest" description="Disordered" evidence="1">
    <location>
        <begin position="183"/>
        <end position="211"/>
    </location>
</feature>
<feature type="compositionally biased region" description="Gly residues" evidence="1">
    <location>
        <begin position="202"/>
        <end position="211"/>
    </location>
</feature>
<feature type="binding site" evidence="8">
    <location>
        <position position="50"/>
    </location>
    <ligand>
        <name>chloride</name>
        <dbReference type="ChEBI" id="CHEBI:17996"/>
    </ligand>
</feature>
<feature type="binding site">
    <location>
        <position position="197"/>
    </location>
    <ligand>
        <name>Fe cation</name>
        <dbReference type="ChEBI" id="CHEBI:24875"/>
    </ligand>
</feature>
<feature type="binding site">
    <location>
        <position position="199"/>
    </location>
    <ligand>
        <name>Fe cation</name>
        <dbReference type="ChEBI" id="CHEBI:24875"/>
    </ligand>
</feature>
<feature type="binding site">
    <location>
        <position position="202"/>
    </location>
    <ligand>
        <name>Ca(2+)</name>
        <dbReference type="ChEBI" id="CHEBI:29108"/>
    </ligand>
</feature>
<feature type="binding site">
    <location>
        <position position="203"/>
    </location>
    <ligand>
        <name>Ca(2+)</name>
        <dbReference type="ChEBI" id="CHEBI:29108"/>
    </ligand>
</feature>
<feature type="helix" evidence="11">
    <location>
        <begin position="10"/>
        <end position="17"/>
    </location>
</feature>
<feature type="strand" evidence="11">
    <location>
        <begin position="18"/>
        <end position="27"/>
    </location>
</feature>
<feature type="turn" evidence="11">
    <location>
        <begin position="28"/>
        <end position="31"/>
    </location>
</feature>
<feature type="strand" evidence="11">
    <location>
        <begin position="32"/>
        <end position="37"/>
    </location>
</feature>
<feature type="strand" evidence="11">
    <location>
        <begin position="45"/>
        <end position="47"/>
    </location>
</feature>
<feature type="strand" evidence="11">
    <location>
        <begin position="52"/>
        <end position="56"/>
    </location>
</feature>
<feature type="strand" evidence="11">
    <location>
        <begin position="66"/>
        <end position="71"/>
    </location>
</feature>
<feature type="turn" evidence="11">
    <location>
        <begin position="74"/>
        <end position="76"/>
    </location>
</feature>
<feature type="strand" evidence="11">
    <location>
        <begin position="79"/>
        <end position="85"/>
    </location>
</feature>
<feature type="strand" evidence="11">
    <location>
        <begin position="88"/>
        <end position="90"/>
    </location>
</feature>
<feature type="strand" evidence="10">
    <location>
        <begin position="100"/>
        <end position="103"/>
    </location>
</feature>
<feature type="strand" evidence="10">
    <location>
        <begin position="109"/>
        <end position="113"/>
    </location>
</feature>
<feature type="turn" evidence="10">
    <location>
        <begin position="114"/>
        <end position="117"/>
    </location>
</feature>
<feature type="strand" evidence="10">
    <location>
        <begin position="118"/>
        <end position="123"/>
    </location>
</feature>
<feature type="strand" evidence="9">
    <location>
        <begin position="140"/>
        <end position="145"/>
    </location>
</feature>
<feature type="strand" evidence="9">
    <location>
        <begin position="147"/>
        <end position="172"/>
    </location>
</feature>
<feature type="strand" evidence="9">
    <location>
        <begin position="174"/>
        <end position="178"/>
    </location>
</feature>
<feature type="strand" evidence="9">
    <location>
        <begin position="180"/>
        <end position="185"/>
    </location>
</feature>
<feature type="strand" evidence="9">
    <location>
        <begin position="187"/>
        <end position="189"/>
    </location>
</feature>
<feature type="turn" evidence="10">
    <location>
        <begin position="194"/>
        <end position="196"/>
    </location>
</feature>
<feature type="strand" evidence="10">
    <location>
        <begin position="204"/>
        <end position="206"/>
    </location>
</feature>
<organismHost>
    <name type="scientific">Enterobacteriaceae</name>
    <dbReference type="NCBI Taxonomy" id="543"/>
</organismHost>
<accession>P31340</accession>
<sequence length="211" mass="22244">MNTLANIQELARALRNMIRTGIIVETDLNAGRCRVQTGGMCTDWLQWLTHRAGRSRTWWAPSVGEQVLILAVGGELDTAFVLPGIYSGDNPSPSVSADALHIRFPDGAVIEYEPETSALTVSGIKTASVTASGSVTATVPVVMVKASTRVTLDTPEVVCTNRLITGTLEVQKGGTMRGNIEHTGGELSSNGKVLHTHKHPGDSGGTTGSPL</sequence>